<name>BMAL2_CHICK</name>
<protein>
    <recommendedName>
        <fullName>Basic helix-loop-helix ARNT-like protein 2</fullName>
    </recommendedName>
    <alternativeName>
        <fullName>Aryl hydrocarbon receptor nuclear translocator-like protein 2</fullName>
    </alternativeName>
    <alternativeName>
        <fullName>Brain and muscle ARNT-like 2</fullName>
        <shortName>cBMAL2</shortName>
    </alternativeName>
</protein>
<reference key="1">
    <citation type="journal article" date="2001" name="Genes Cells">
        <title>Chicken pineal clock genes: implication of BMAL2 as a bidirectional regulator in circadian clock oscillation.</title>
        <authorList>
            <person name="Okano T."/>
            <person name="Yamamoto K."/>
            <person name="Okano K."/>
            <person name="Hirota T."/>
            <person name="Kasahara T."/>
            <person name="Sasaki M."/>
            <person name="Takanaka Y."/>
            <person name="Fukada Y."/>
        </authorList>
    </citation>
    <scope>NUCLEOTIDE SEQUENCE [MRNA]</scope>
    <scope>TISSUE SPECIFICITY</scope>
    <scope>INTERACTION WITH CLOCK AND BMAL1</scope>
    <scope>INDUCTION</scope>
    <source>
        <tissue>Pineal gland</tissue>
    </source>
</reference>
<comment type="function">
    <text evidence="1 2 3">Transcriptional activator which forms a core component of the circadian clock. The circadian clock, an internal time-keeping system, regulates various physiological processes through the generation of approximately 24 hour circadian rhythms in gene expression, which are translated into rhythms in metabolism and behavior. It is derived from the Latin roots 'circa' (about) and 'diem' (day) and acts as an important regulator of a wide array of physiological functions including metabolism, sleep, body temperature, blood pressure, endocrine, immune, cardiovascular, and renal function. Consists of two major components: the central clock, residing in the suprachiasmatic nucleus (SCN) of the brain, and the peripheral clocks that are present in nearly every tissue and organ system. Both the central and peripheral clocks can be reset by environmental cues, also known as Zeitgebers (German for 'timegivers'). The predominant Zeitgeber for the central clock is light, which is sensed by retina and signals directly to the SCN. The central clock entrains the peripheral clocks through neuronal and hormonal signals, body temperature and feeding-related cues, aligning all clocks with the external light/dark cycle. Circadian rhythms allow an organism to achieve temporal homeostasis with its environment at the molecular level by regulating gene expression to create a peak of protein expression once every 24 hours to control when a particular physiological process is most active with respect to the solar day. Transcription and translation of core clock components (CLOCK, NPAS2, BMAL1, BMAL2, PER1, PER2, PER3, CRY1 and CRY2) plays a critical role in rhythm generation, whereas delays imposed by post-translational modifications (PTMs) are important for determining the period (tau) of the rhythms (tau refers to the period of a rhythm and is the length, in time, of one complete cycle). A diurnal rhythm is synchronized with the day/night cycle, while the ultradian and infradian rhythms have a period shorter and longer than 24 hours, respectively. Disruptions in the circadian rhythms contribute to the pathology of cardiovascular diseases, cancer, metabolic syndromes and aging. A transcription/translation feedback loop (TTFL) forms the core of the molecular circadian clock mechanism. Transcription factors, CLOCK or NPAS2 and BMAL1 or BMAL2, form the positive limb of the feedback loop, act in the form of a heterodimer and activate the transcription of core clock genes and clock-controlled genes (involved in key metabolic processes), harboring E-box elements (5'-CACGTG-3') within their promoters. The core clock genes: PER1/2/3 and CRY1/2 which are transcriptional repressors form the negative limb of the feedback loop and interact with the CLOCK|NPAS2-BMAL1|BMAL2 heterodimer inhibiting its activity and thereby negatively regulating their own expression. This heterodimer also activates nuclear receptors NR1D1/2 and RORA/B/G, which form a second feedback loop and which activate and repress BMAL1 transcription, respectively. The preferred binding motif for the CLOCK-BMAL1 heterodimer is 5'-CACGTGA-3', which contains a flanking adenine nucleotide at the 3-prime end of the canonical 6-nucleotide E-box sequence. CLOCK specifically binds to the half-site 5'-CAC-3', while BMAL1 binds to the half-site 5'-GTGA-3'.</text>
</comment>
<comment type="subunit">
    <text evidence="7">Component of the circadian core oscillator, which includes the CRY proteins, CLOCK, or NPAS2, BMAL1 or BMAL2, CSNK1D and/or CSNK1E, TIMELESS and the PER proteins. Interacts directly with CLOCK to form the BMAL2-CLOCK transactivator. Can form heterodimers or homodimers which interact directly with CLOCK to form the transcription activator.</text>
</comment>
<comment type="subcellular location">
    <subcellularLocation>
        <location evidence="5">Nucleus</location>
    </subcellularLocation>
</comment>
<comment type="tissue specificity">
    <text evidence="7">Expressed in the pineal gland.</text>
</comment>
<comment type="induction">
    <text evidence="7">Expression in the pineal gland exhibits circadian rhythm. Maximum levels expressed at CT14, and between ZT14 and ZT18.</text>
</comment>
<organism>
    <name type="scientific">Gallus gallus</name>
    <name type="common">Chicken</name>
    <dbReference type="NCBI Taxonomy" id="9031"/>
    <lineage>
        <taxon>Eukaryota</taxon>
        <taxon>Metazoa</taxon>
        <taxon>Chordata</taxon>
        <taxon>Craniata</taxon>
        <taxon>Vertebrata</taxon>
        <taxon>Euteleostomi</taxon>
        <taxon>Archelosauria</taxon>
        <taxon>Archosauria</taxon>
        <taxon>Dinosauria</taxon>
        <taxon>Saurischia</taxon>
        <taxon>Theropoda</taxon>
        <taxon>Coelurosauria</taxon>
        <taxon>Aves</taxon>
        <taxon>Neognathae</taxon>
        <taxon>Galloanserae</taxon>
        <taxon>Galliformes</taxon>
        <taxon>Phasianidae</taxon>
        <taxon>Phasianinae</taxon>
        <taxon>Gallus</taxon>
    </lineage>
</organism>
<gene>
    <name type="primary">BMAL2</name>
    <name type="synonym">ARNTL2</name>
</gene>
<feature type="chain" id="PRO_0000273633" description="Basic helix-loop-helix ARNT-like protein 2">
    <location>
        <begin position="1"/>
        <end position="622"/>
    </location>
</feature>
<feature type="domain" description="bHLH" evidence="5">
    <location>
        <begin position="92"/>
        <end position="145"/>
    </location>
</feature>
<feature type="domain" description="PAS 1" evidence="4">
    <location>
        <begin position="163"/>
        <end position="235"/>
    </location>
</feature>
<feature type="domain" description="PAS 2" evidence="4">
    <location>
        <begin position="342"/>
        <end position="412"/>
    </location>
</feature>
<feature type="domain" description="PAC">
    <location>
        <begin position="417"/>
        <end position="460"/>
    </location>
</feature>
<feature type="region of interest" description="Disordered" evidence="6">
    <location>
        <begin position="1"/>
        <end position="29"/>
    </location>
</feature>
<feature type="region of interest" description="Disordered" evidence="6">
    <location>
        <begin position="41"/>
        <end position="86"/>
    </location>
</feature>
<feature type="compositionally biased region" description="Low complexity" evidence="6">
    <location>
        <begin position="1"/>
        <end position="10"/>
    </location>
</feature>
<feature type="compositionally biased region" description="Polar residues" evidence="6">
    <location>
        <begin position="45"/>
        <end position="54"/>
    </location>
</feature>
<feature type="compositionally biased region" description="Acidic residues" evidence="6">
    <location>
        <begin position="67"/>
        <end position="76"/>
    </location>
</feature>
<feature type="compositionally biased region" description="Basic and acidic residues" evidence="6">
    <location>
        <begin position="77"/>
        <end position="86"/>
    </location>
</feature>
<feature type="site" description="Interaction with E-box DNA" evidence="1">
    <location>
        <position position="97"/>
    </location>
</feature>
<feature type="site" description="Interaction with E-box DNA" evidence="1">
    <location>
        <position position="101"/>
    </location>
</feature>
<feature type="site" description="Interaction with E-box DNA" evidence="1">
    <location>
        <position position="105"/>
    </location>
</feature>
<feature type="site" description="Important for interaction with CLOCK" evidence="1">
    <location>
        <position position="145"/>
    </location>
</feature>
<sequence length="622" mass="69132">MAEAGVGSAEGAEEERRAVEENFPVDGNSCIASGVPSLMNPITKPATTSFNNSVVEIPRKRKGSDSDNQDTVEVDGDPQKRNEDEEHLKIKDFREAHSQTEKRRRDKMNNLIEELSAMIPQCNPMARKLDKLTVLRMAVQHLKSLKGSTSSYTEVRYKPSFLKDDELRQLILRAADGFLFVVGCNRGKILFVSESVCKILNYDQTSLIGQSLFDYLHPKDVAKVKEQLSSSDVSPREKLVDGKTGLQVHTDFQAGPARLNSGARRSFFCRIKCSRTTVKEEKECLPNPKKKDHRKYCTIHCTGYMKNWPPSEVGVEEENDVEKNSSNFNCLVAIGRLHPYIVPQKSGEIKVKATEFVTRFAMDGKFVYVDQRATAILGYLPQELLGTSCYEYCHQDDHNHLAEKHKEVLQNKEKVFTNSYKFRAKDGSFITLKSQWFSFMNPWTKELEYIVSNNTVVLGHNESAEEQVSYGSQPAEGAVKQSLVSVPGMSSGTVLGAGSIGTEIANEILELQRLHSSPPGELSPSHLLRKSPSPALTVNCSNVPNKELIQLCPSEAEVLETSEQNQGAIPFPSNEPLLGGNSQLDFAICENDDTAMTALMNYLEADGGLGDPAELSDIQWAL</sequence>
<accession>Q8QGQ7</accession>
<dbReference type="EMBL" id="AF246958">
    <property type="protein sequence ID" value="AAL98707.1"/>
    <property type="molecule type" value="mRNA"/>
</dbReference>
<dbReference type="RefSeq" id="NP_989464.1">
    <property type="nucleotide sequence ID" value="NM_204133.1"/>
</dbReference>
<dbReference type="SMR" id="Q8QGQ7"/>
<dbReference type="FunCoup" id="Q8QGQ7">
    <property type="interactions" value="99"/>
</dbReference>
<dbReference type="STRING" id="9031.ENSGALP00000067994"/>
<dbReference type="PaxDb" id="9031-ENSGALP00000022780"/>
<dbReference type="Ensembl" id="ENSGALT00010031174.1">
    <property type="protein sequence ID" value="ENSGALP00010018159.1"/>
    <property type="gene ID" value="ENSGALG00010012985.1"/>
</dbReference>
<dbReference type="GeneID" id="373925"/>
<dbReference type="KEGG" id="gga:373925"/>
<dbReference type="CTD" id="486624"/>
<dbReference type="VEuPathDB" id="HostDB:geneid_373925"/>
<dbReference type="eggNOG" id="KOG3561">
    <property type="taxonomic scope" value="Eukaryota"/>
</dbReference>
<dbReference type="GeneTree" id="ENSGT00940000160423"/>
<dbReference type="InParanoid" id="Q8QGQ7"/>
<dbReference type="OrthoDB" id="71302at2759"/>
<dbReference type="PhylomeDB" id="Q8QGQ7"/>
<dbReference type="PRO" id="PR:Q8QGQ7"/>
<dbReference type="Proteomes" id="UP000000539">
    <property type="component" value="Chromosome 1"/>
</dbReference>
<dbReference type="GO" id="GO:0034751">
    <property type="term" value="C:aryl hydrocarbon receptor complex"/>
    <property type="evidence" value="ECO:0000318"/>
    <property type="project" value="GO_Central"/>
</dbReference>
<dbReference type="GO" id="GO:0005737">
    <property type="term" value="C:cytoplasm"/>
    <property type="evidence" value="ECO:0007669"/>
    <property type="project" value="InterPro"/>
</dbReference>
<dbReference type="GO" id="GO:0005634">
    <property type="term" value="C:nucleus"/>
    <property type="evidence" value="ECO:0000318"/>
    <property type="project" value="GO_Central"/>
</dbReference>
<dbReference type="GO" id="GO:0005667">
    <property type="term" value="C:transcription regulator complex"/>
    <property type="evidence" value="ECO:0007669"/>
    <property type="project" value="InterPro"/>
</dbReference>
<dbReference type="GO" id="GO:0000981">
    <property type="term" value="F:DNA-binding transcription factor activity, RNA polymerase II-specific"/>
    <property type="evidence" value="ECO:0000318"/>
    <property type="project" value="GO_Central"/>
</dbReference>
<dbReference type="GO" id="GO:0070888">
    <property type="term" value="F:E-box binding"/>
    <property type="evidence" value="ECO:0000250"/>
    <property type="project" value="UniProtKB"/>
</dbReference>
<dbReference type="GO" id="GO:0046983">
    <property type="term" value="F:protein dimerization activity"/>
    <property type="evidence" value="ECO:0007669"/>
    <property type="project" value="InterPro"/>
</dbReference>
<dbReference type="GO" id="GO:0000978">
    <property type="term" value="F:RNA polymerase II cis-regulatory region sequence-specific DNA binding"/>
    <property type="evidence" value="ECO:0000318"/>
    <property type="project" value="GO_Central"/>
</dbReference>
<dbReference type="GO" id="GO:0042753">
    <property type="term" value="P:positive regulation of circadian rhythm"/>
    <property type="evidence" value="ECO:0000250"/>
    <property type="project" value="UniProtKB"/>
</dbReference>
<dbReference type="GO" id="GO:0045893">
    <property type="term" value="P:positive regulation of DNA-templated transcription"/>
    <property type="evidence" value="ECO:0000250"/>
    <property type="project" value="UniProtKB"/>
</dbReference>
<dbReference type="GO" id="GO:0006357">
    <property type="term" value="P:regulation of transcription by RNA polymerase II"/>
    <property type="evidence" value="ECO:0000318"/>
    <property type="project" value="GO_Central"/>
</dbReference>
<dbReference type="GO" id="GO:0048511">
    <property type="term" value="P:rhythmic process"/>
    <property type="evidence" value="ECO:0007669"/>
    <property type="project" value="UniProtKB-KW"/>
</dbReference>
<dbReference type="CDD" id="cd11469">
    <property type="entry name" value="bHLH-PAS_ARNTL2_PASD9"/>
    <property type="match status" value="1"/>
</dbReference>
<dbReference type="CDD" id="cd00130">
    <property type="entry name" value="PAS"/>
    <property type="match status" value="2"/>
</dbReference>
<dbReference type="FunFam" id="4.10.280.10:FF:000018">
    <property type="entry name" value="Aryl hydrocarbon receptor nuclear translocator-like protein 1"/>
    <property type="match status" value="1"/>
</dbReference>
<dbReference type="FunFam" id="3.30.450.20:FF:000006">
    <property type="entry name" value="aryl hydrocarbon receptor nuclear translocator-like protein 1"/>
    <property type="match status" value="1"/>
</dbReference>
<dbReference type="FunFam" id="3.30.450.20:FF:000010">
    <property type="entry name" value="Aryl hydrocarbon receptor nuclear translocator-like, isoform CRA_b"/>
    <property type="match status" value="1"/>
</dbReference>
<dbReference type="Gene3D" id="4.10.280.10">
    <property type="entry name" value="Helix-loop-helix DNA-binding domain"/>
    <property type="match status" value="1"/>
</dbReference>
<dbReference type="Gene3D" id="3.30.450.20">
    <property type="entry name" value="PAS domain"/>
    <property type="match status" value="2"/>
</dbReference>
<dbReference type="InterPro" id="IPR011598">
    <property type="entry name" value="bHLH_dom"/>
</dbReference>
<dbReference type="InterPro" id="IPR050933">
    <property type="entry name" value="Circadian_TF"/>
</dbReference>
<dbReference type="InterPro" id="IPR036638">
    <property type="entry name" value="HLH_DNA-bd_sf"/>
</dbReference>
<dbReference type="InterPro" id="IPR001067">
    <property type="entry name" value="Nuc_translocat"/>
</dbReference>
<dbReference type="InterPro" id="IPR000014">
    <property type="entry name" value="PAS"/>
</dbReference>
<dbReference type="InterPro" id="IPR035965">
    <property type="entry name" value="PAS-like_dom_sf"/>
</dbReference>
<dbReference type="InterPro" id="IPR013767">
    <property type="entry name" value="PAS_fold"/>
</dbReference>
<dbReference type="NCBIfam" id="TIGR00229">
    <property type="entry name" value="sensory_box"/>
    <property type="match status" value="2"/>
</dbReference>
<dbReference type="PANTHER" id="PTHR23042">
    <property type="entry name" value="CIRCADIAN PROTEIN CLOCK/ARNT/BMAL/PAS"/>
    <property type="match status" value="1"/>
</dbReference>
<dbReference type="Pfam" id="PF00010">
    <property type="entry name" value="HLH"/>
    <property type="match status" value="1"/>
</dbReference>
<dbReference type="Pfam" id="PF00989">
    <property type="entry name" value="PAS"/>
    <property type="match status" value="1"/>
</dbReference>
<dbReference type="Pfam" id="PF14598">
    <property type="entry name" value="PAS_11"/>
    <property type="match status" value="1"/>
</dbReference>
<dbReference type="PRINTS" id="PR00785">
    <property type="entry name" value="NCTRNSLOCATR"/>
</dbReference>
<dbReference type="SMART" id="SM00353">
    <property type="entry name" value="HLH"/>
    <property type="match status" value="1"/>
</dbReference>
<dbReference type="SMART" id="SM00091">
    <property type="entry name" value="PAS"/>
    <property type="match status" value="2"/>
</dbReference>
<dbReference type="SUPFAM" id="SSF47459">
    <property type="entry name" value="HLH, helix-loop-helix DNA-binding domain"/>
    <property type="match status" value="1"/>
</dbReference>
<dbReference type="SUPFAM" id="SSF55785">
    <property type="entry name" value="PYP-like sensor domain (PAS domain)"/>
    <property type="match status" value="2"/>
</dbReference>
<dbReference type="PROSITE" id="PS50888">
    <property type="entry name" value="BHLH"/>
    <property type="match status" value="1"/>
</dbReference>
<dbReference type="PROSITE" id="PS50112">
    <property type="entry name" value="PAS"/>
    <property type="match status" value="2"/>
</dbReference>
<keyword id="KW-0010">Activator</keyword>
<keyword id="KW-0090">Biological rhythms</keyword>
<keyword id="KW-0238">DNA-binding</keyword>
<keyword id="KW-0539">Nucleus</keyword>
<keyword id="KW-1185">Reference proteome</keyword>
<keyword id="KW-0677">Repeat</keyword>
<keyword id="KW-0804">Transcription</keyword>
<keyword id="KW-0805">Transcription regulation</keyword>
<proteinExistence type="evidence at protein level"/>
<evidence type="ECO:0000250" key="1">
    <source>
        <dbReference type="UniProtKB" id="O00327"/>
    </source>
</evidence>
<evidence type="ECO:0000250" key="2">
    <source>
        <dbReference type="UniProtKB" id="Q2VPD4"/>
    </source>
</evidence>
<evidence type="ECO:0000250" key="3">
    <source>
        <dbReference type="UniProtKB" id="Q8WYA1"/>
    </source>
</evidence>
<evidence type="ECO:0000255" key="4">
    <source>
        <dbReference type="PROSITE-ProRule" id="PRU00140"/>
    </source>
</evidence>
<evidence type="ECO:0000255" key="5">
    <source>
        <dbReference type="PROSITE-ProRule" id="PRU00981"/>
    </source>
</evidence>
<evidence type="ECO:0000256" key="6">
    <source>
        <dbReference type="SAM" id="MobiDB-lite"/>
    </source>
</evidence>
<evidence type="ECO:0000269" key="7">
    <source>
    </source>
</evidence>